<feature type="signal peptide" evidence="2">
    <location>
        <begin position="1"/>
        <end position="27"/>
    </location>
</feature>
<feature type="chain" id="PRO_0000320132" description="CMRF35-like molecule 8">
    <location>
        <begin position="28"/>
        <end position="318"/>
    </location>
</feature>
<feature type="topological domain" description="Extracellular" evidence="2">
    <location>
        <begin position="28"/>
        <end position="185"/>
    </location>
</feature>
<feature type="transmembrane region" description="Helical" evidence="2">
    <location>
        <begin position="186"/>
        <end position="206"/>
    </location>
</feature>
<feature type="topological domain" description="Cytoplasmic" evidence="2">
    <location>
        <begin position="207"/>
        <end position="318"/>
    </location>
</feature>
<feature type="domain" description="Ig-like V-type">
    <location>
        <begin position="28"/>
        <end position="129"/>
    </location>
</feature>
<feature type="region of interest" description="Disordered" evidence="4">
    <location>
        <begin position="139"/>
        <end position="174"/>
    </location>
</feature>
<feature type="region of interest" description="Disordered" evidence="4">
    <location>
        <begin position="284"/>
        <end position="318"/>
    </location>
</feature>
<feature type="compositionally biased region" description="Low complexity" evidence="4">
    <location>
        <begin position="139"/>
        <end position="148"/>
    </location>
</feature>
<feature type="compositionally biased region" description="Polar residues" evidence="4">
    <location>
        <begin position="284"/>
        <end position="296"/>
    </location>
</feature>
<feature type="compositionally biased region" description="Basic and acidic residues" evidence="4">
    <location>
        <begin position="297"/>
        <end position="308"/>
    </location>
</feature>
<feature type="modified residue" description="Phosphotyrosine" evidence="10">
    <location>
        <position position="303"/>
    </location>
</feature>
<feature type="glycosylation site" description="N-linked (GlcNAc...) asparagine" evidence="2">
    <location>
        <position position="93"/>
    </location>
</feature>
<feature type="disulfide bond" evidence="3">
    <location>
        <begin position="46"/>
        <end position="113"/>
    </location>
</feature>
<feature type="splice variant" id="VSP_031608" description="In isoform 2." evidence="8">
    <location>
        <begin position="142"/>
        <end position="145"/>
    </location>
</feature>
<feature type="mutagenesis site" description="Abolishes internalization after cross-linking." evidence="5">
    <original>Y</original>
    <variation>F</variation>
    <location>
        <position position="237"/>
    </location>
</feature>
<feature type="sequence conflict" description="In Ref. 1; BAC80268." evidence="9" ref="1">
    <original>S</original>
    <variation>T</variation>
    <location>
        <position position="35"/>
    </location>
</feature>
<feature type="sequence conflict" description="In Ref. 1; BAC80268." evidence="9" ref="1">
    <original>E</original>
    <variation>Q</variation>
    <location>
        <position position="40"/>
    </location>
</feature>
<feature type="sequence conflict" description="In Ref. 1; BAC80268." evidence="9" ref="1">
    <original>R</original>
    <variation>Q</variation>
    <location>
        <position position="47"/>
    </location>
</feature>
<feature type="sequence conflict" description="In Ref. 1; BAC80268." evidence="9" ref="1">
    <original>V</original>
    <variation>G</variation>
    <location>
        <position position="62"/>
    </location>
</feature>
<feature type="sequence conflict" description="In Ref. 1; BAC80268." evidence="9" ref="1">
    <original>I</original>
    <variation>V</variation>
    <location>
        <position position="66"/>
    </location>
</feature>
<feature type="sequence conflict" description="In Ref. 1; BAC80268." evidence="9" ref="1">
    <original>E</original>
    <variation>D</variation>
    <location>
        <position position="106"/>
    </location>
</feature>
<feature type="sequence conflict" description="In Ref. 1; BAC80268." evidence="9" ref="1">
    <original>SLFDGSLGF</original>
    <variation>PFFNAPLGL</variation>
    <location>
        <begin position="118"/>
        <end position="126"/>
    </location>
</feature>
<feature type="sequence conflict" description="In Ref. 1; BAC80268." evidence="9" ref="1">
    <original>GH</original>
    <variation>DR</variation>
    <location>
        <begin position="172"/>
        <end position="173"/>
    </location>
</feature>
<feature type="sequence conflict" description="In Ref. 3; AAR27945." evidence="9" ref="3">
    <original>R</original>
    <variation>G</variation>
    <location>
        <position position="218"/>
    </location>
</feature>
<comment type="function">
    <text evidence="1 5 6 7">Inhibitory receptor which may contribute to the down-regulation of cytolytic activity in natural killer (NK) cells, and to the down-regulation of mast cell degranulation (PubMed:12874256, PubMed:12893283, PubMed:16339535). Negatively regulates the Toll-like receptor (TLR) signaling mediated by MYD88 but not TRIF through activation of PTPN6 (By similarity).</text>
</comment>
<comment type="subunit">
    <text evidence="6">Upon tyrosine-phosphorylation, interacts with PTN6/SHP-1 and PTPN11/SHP-2 and INPP5D.</text>
</comment>
<comment type="subcellular location">
    <subcellularLocation>
        <location evidence="5 6">Cell membrane</location>
        <topology evidence="5 6">Single-pass type I membrane protein</topology>
    </subcellularLocation>
</comment>
<comment type="alternative products">
    <event type="alternative splicing"/>
    <isoform>
        <id>Q6SJQ0-1</id>
        <name>1</name>
        <name>b</name>
        <sequence type="displayed"/>
    </isoform>
    <isoform>
        <id>Q6SJQ0-2</id>
        <name>2</name>
        <name>a</name>
        <sequence type="described" ref="VSP_031608"/>
    </isoform>
</comment>
<comment type="tissue specificity">
    <text evidence="5 6 7">Present on the surface of the majority of myeloid cells and a subset of B-cells. Present on the surface of NK cells after IL-12 stimulation.</text>
</comment>
<comment type="PTM">
    <text evidence="5 6">Phosphorylated on tyrosine.</text>
</comment>
<comment type="PTM">
    <text evidence="5">N-glycosylated.</text>
</comment>
<comment type="similarity">
    <text evidence="9">Belongs to the CD300 family.</text>
</comment>
<accession>Q6SJQ0</accession>
<accession>B9EIB1</accession>
<accession>Q7TN56</accession>
<accession>Q7TSN3</accession>
<accession>Q8CFN3</accession>
<keyword id="KW-0025">Alternative splicing</keyword>
<keyword id="KW-1003">Cell membrane</keyword>
<keyword id="KW-1015">Disulfide bond</keyword>
<keyword id="KW-0325">Glycoprotein</keyword>
<keyword id="KW-0391">Immunity</keyword>
<keyword id="KW-0393">Immunoglobulin domain</keyword>
<keyword id="KW-0472">Membrane</keyword>
<keyword id="KW-0597">Phosphoprotein</keyword>
<keyword id="KW-0675">Receptor</keyword>
<keyword id="KW-1185">Reference proteome</keyword>
<keyword id="KW-0732">Signal</keyword>
<keyword id="KW-0812">Transmembrane</keyword>
<keyword id="KW-1133">Transmembrane helix</keyword>
<reference key="1">
    <citation type="journal article" date="2003" name="Biochem. Biophys. Res. Commun.">
        <title>Identification and characterization of a new pair of immunoglobulin-like receptors LMIR1 and 2 derived from murine bone marrow-derived mast cells.</title>
        <authorList>
            <person name="Kumagai H."/>
            <person name="Oki T."/>
            <person name="Tamitsu K."/>
            <person name="Feng S.-Z."/>
            <person name="Ono M."/>
            <person name="Nakajima H."/>
            <person name="Bao Y.-C."/>
            <person name="Kawakami Y."/>
            <person name="Nagayoshi K."/>
            <person name="Copeland N.G."/>
            <person name="Gilbert D.J."/>
            <person name="Jenkins N.A."/>
            <person name="Kawakami T."/>
            <person name="Kitamura T."/>
        </authorList>
    </citation>
    <scope>NUCLEOTIDE SEQUENCE [MRNA] (ISOFORM 1)</scope>
    <scope>FUNCTION</scope>
    <scope>TISSUE SPECIFICITY</scope>
    <scope>SUBCELLULAR LOCATION</scope>
    <scope>PHOSPHORYLATION</scope>
    <scope>INTERACTION WITH PTPN6; PTPN11 AND INPP5D</scope>
    <source>
        <strain>CBA/J</strain>
        <tissue>Mast cell</tissue>
    </source>
</reference>
<reference key="2">
    <citation type="journal article" date="2003" name="J. Exp. Med.">
        <title>Paired activating and inhibitory immunoglobulin-like receptors, MAIR-I and MAIR-II, regulate mast cell and macrophage activation.</title>
        <authorList>
            <person name="Yotsumoto K."/>
            <person name="Okoshi Y."/>
            <person name="Shibuya K."/>
            <person name="Yamazaki S."/>
            <person name="Tahara-Hanaoka S."/>
            <person name="Honda S."/>
            <person name="Osawa M."/>
            <person name="Kuroiwa A."/>
            <person name="Matsuda Y."/>
            <person name="Tenen D.G."/>
            <person name="Iwama A."/>
            <person name="Nakauchi H."/>
            <person name="Shibuya A."/>
        </authorList>
    </citation>
    <scope>NUCLEOTIDE SEQUENCE [MRNA] (ISOFORMS 1 AND 2)</scope>
    <scope>FUNCTION</scope>
    <scope>GLYCOSYLATION</scope>
    <scope>PHOSPHORYLATION</scope>
    <scope>TISSUE SPECIFICITY</scope>
    <scope>SUBCELLULAR LOCATION</scope>
    <scope>MUTAGENESIS OF TYR-237</scope>
    <source>
        <tissue>Fetal liver</tissue>
    </source>
</reference>
<reference key="3">
    <citation type="journal article" date="2003" name="J. Immunol.">
        <title>CMRF-35-like molecule-1, a novel mouse myeloid receptor, can inhibit osteoclast formation.</title>
        <authorList>
            <person name="Chung D.-H."/>
            <person name="Humphrey M.B."/>
            <person name="Nakamura M.C."/>
            <person name="Ginzinger D.G."/>
            <person name="Seaman W.E."/>
            <person name="Daws M.R."/>
        </authorList>
    </citation>
    <scope>NUCLEOTIDE SEQUENCE [MRNA] (ISOFORM 1)</scope>
    <source>
        <strain>C57BL/6J</strain>
    </source>
</reference>
<reference key="4">
    <citation type="submission" date="2001-07" db="EMBL/GenBank/DDBJ databases">
        <title>Molecular cloning of an NK inhibitory receptor-related gene expressed in a mouse microglial cell line, Ra2.</title>
        <authorList>
            <person name="Yoshimoto M."/>
            <person name="Sekine S."/>
            <person name="Yazaki M."/>
            <person name="Sawada M."/>
        </authorList>
    </citation>
    <scope>NUCLEOTIDE SEQUENCE [MRNA] (ISOFORM 1)</scope>
</reference>
<reference key="5">
    <citation type="journal article" date="2005" name="Science">
        <title>The transcriptional landscape of the mammalian genome.</title>
        <authorList>
            <person name="Carninci P."/>
            <person name="Kasukawa T."/>
            <person name="Katayama S."/>
            <person name="Gough J."/>
            <person name="Frith M.C."/>
            <person name="Maeda N."/>
            <person name="Oyama R."/>
            <person name="Ravasi T."/>
            <person name="Lenhard B."/>
            <person name="Wells C."/>
            <person name="Kodzius R."/>
            <person name="Shimokawa K."/>
            <person name="Bajic V.B."/>
            <person name="Brenner S.E."/>
            <person name="Batalov S."/>
            <person name="Forrest A.R."/>
            <person name="Zavolan M."/>
            <person name="Davis M.J."/>
            <person name="Wilming L.G."/>
            <person name="Aidinis V."/>
            <person name="Allen J.E."/>
            <person name="Ambesi-Impiombato A."/>
            <person name="Apweiler R."/>
            <person name="Aturaliya R.N."/>
            <person name="Bailey T.L."/>
            <person name="Bansal M."/>
            <person name="Baxter L."/>
            <person name="Beisel K.W."/>
            <person name="Bersano T."/>
            <person name="Bono H."/>
            <person name="Chalk A.M."/>
            <person name="Chiu K.P."/>
            <person name="Choudhary V."/>
            <person name="Christoffels A."/>
            <person name="Clutterbuck D.R."/>
            <person name="Crowe M.L."/>
            <person name="Dalla E."/>
            <person name="Dalrymple B.P."/>
            <person name="de Bono B."/>
            <person name="Della Gatta G."/>
            <person name="di Bernardo D."/>
            <person name="Down T."/>
            <person name="Engstrom P."/>
            <person name="Fagiolini M."/>
            <person name="Faulkner G."/>
            <person name="Fletcher C.F."/>
            <person name="Fukushima T."/>
            <person name="Furuno M."/>
            <person name="Futaki S."/>
            <person name="Gariboldi M."/>
            <person name="Georgii-Hemming P."/>
            <person name="Gingeras T.R."/>
            <person name="Gojobori T."/>
            <person name="Green R.E."/>
            <person name="Gustincich S."/>
            <person name="Harbers M."/>
            <person name="Hayashi Y."/>
            <person name="Hensch T.K."/>
            <person name="Hirokawa N."/>
            <person name="Hill D."/>
            <person name="Huminiecki L."/>
            <person name="Iacono M."/>
            <person name="Ikeo K."/>
            <person name="Iwama A."/>
            <person name="Ishikawa T."/>
            <person name="Jakt M."/>
            <person name="Kanapin A."/>
            <person name="Katoh M."/>
            <person name="Kawasawa Y."/>
            <person name="Kelso J."/>
            <person name="Kitamura H."/>
            <person name="Kitano H."/>
            <person name="Kollias G."/>
            <person name="Krishnan S.P."/>
            <person name="Kruger A."/>
            <person name="Kummerfeld S.K."/>
            <person name="Kurochkin I.V."/>
            <person name="Lareau L.F."/>
            <person name="Lazarevic D."/>
            <person name="Lipovich L."/>
            <person name="Liu J."/>
            <person name="Liuni S."/>
            <person name="McWilliam S."/>
            <person name="Madan Babu M."/>
            <person name="Madera M."/>
            <person name="Marchionni L."/>
            <person name="Matsuda H."/>
            <person name="Matsuzawa S."/>
            <person name="Miki H."/>
            <person name="Mignone F."/>
            <person name="Miyake S."/>
            <person name="Morris K."/>
            <person name="Mottagui-Tabar S."/>
            <person name="Mulder N."/>
            <person name="Nakano N."/>
            <person name="Nakauchi H."/>
            <person name="Ng P."/>
            <person name="Nilsson R."/>
            <person name="Nishiguchi S."/>
            <person name="Nishikawa S."/>
            <person name="Nori F."/>
            <person name="Ohara O."/>
            <person name="Okazaki Y."/>
            <person name="Orlando V."/>
            <person name="Pang K.C."/>
            <person name="Pavan W.J."/>
            <person name="Pavesi G."/>
            <person name="Pesole G."/>
            <person name="Petrovsky N."/>
            <person name="Piazza S."/>
            <person name="Reed J."/>
            <person name="Reid J.F."/>
            <person name="Ring B.Z."/>
            <person name="Ringwald M."/>
            <person name="Rost B."/>
            <person name="Ruan Y."/>
            <person name="Salzberg S.L."/>
            <person name="Sandelin A."/>
            <person name="Schneider C."/>
            <person name="Schoenbach C."/>
            <person name="Sekiguchi K."/>
            <person name="Semple C.A."/>
            <person name="Seno S."/>
            <person name="Sessa L."/>
            <person name="Sheng Y."/>
            <person name="Shibata Y."/>
            <person name="Shimada H."/>
            <person name="Shimada K."/>
            <person name="Silva D."/>
            <person name="Sinclair B."/>
            <person name="Sperling S."/>
            <person name="Stupka E."/>
            <person name="Sugiura K."/>
            <person name="Sultana R."/>
            <person name="Takenaka Y."/>
            <person name="Taki K."/>
            <person name="Tammoja K."/>
            <person name="Tan S.L."/>
            <person name="Tang S."/>
            <person name="Taylor M.S."/>
            <person name="Tegner J."/>
            <person name="Teichmann S.A."/>
            <person name="Ueda H.R."/>
            <person name="van Nimwegen E."/>
            <person name="Verardo R."/>
            <person name="Wei C.L."/>
            <person name="Yagi K."/>
            <person name="Yamanishi H."/>
            <person name="Zabarovsky E."/>
            <person name="Zhu S."/>
            <person name="Zimmer A."/>
            <person name="Hide W."/>
            <person name="Bult C."/>
            <person name="Grimmond S.M."/>
            <person name="Teasdale R.D."/>
            <person name="Liu E.T."/>
            <person name="Brusic V."/>
            <person name="Quackenbush J."/>
            <person name="Wahlestedt C."/>
            <person name="Mattick J.S."/>
            <person name="Hume D.A."/>
            <person name="Kai C."/>
            <person name="Sasaki D."/>
            <person name="Tomaru Y."/>
            <person name="Fukuda S."/>
            <person name="Kanamori-Katayama M."/>
            <person name="Suzuki M."/>
            <person name="Aoki J."/>
            <person name="Arakawa T."/>
            <person name="Iida J."/>
            <person name="Imamura K."/>
            <person name="Itoh M."/>
            <person name="Kato T."/>
            <person name="Kawaji H."/>
            <person name="Kawagashira N."/>
            <person name="Kawashima T."/>
            <person name="Kojima M."/>
            <person name="Kondo S."/>
            <person name="Konno H."/>
            <person name="Nakano K."/>
            <person name="Ninomiya N."/>
            <person name="Nishio T."/>
            <person name="Okada M."/>
            <person name="Plessy C."/>
            <person name="Shibata K."/>
            <person name="Shiraki T."/>
            <person name="Suzuki S."/>
            <person name="Tagami M."/>
            <person name="Waki K."/>
            <person name="Watahiki A."/>
            <person name="Okamura-Oho Y."/>
            <person name="Suzuki H."/>
            <person name="Kawai J."/>
            <person name="Hayashizaki Y."/>
        </authorList>
    </citation>
    <scope>NUCLEOTIDE SEQUENCE [LARGE SCALE MRNA] (ISOFORM 1)</scope>
</reference>
<reference key="6">
    <citation type="journal article" date="2009" name="PLoS Biol.">
        <title>Lineage-specific biology revealed by a finished genome assembly of the mouse.</title>
        <authorList>
            <person name="Church D.M."/>
            <person name="Goodstadt L."/>
            <person name="Hillier L.W."/>
            <person name="Zody M.C."/>
            <person name="Goldstein S."/>
            <person name="She X."/>
            <person name="Bult C.J."/>
            <person name="Agarwala R."/>
            <person name="Cherry J.L."/>
            <person name="DiCuccio M."/>
            <person name="Hlavina W."/>
            <person name="Kapustin Y."/>
            <person name="Meric P."/>
            <person name="Maglott D."/>
            <person name="Birtle Z."/>
            <person name="Marques A.C."/>
            <person name="Graves T."/>
            <person name="Zhou S."/>
            <person name="Teague B."/>
            <person name="Potamousis K."/>
            <person name="Churas C."/>
            <person name="Place M."/>
            <person name="Herschleb J."/>
            <person name="Runnheim R."/>
            <person name="Forrest D."/>
            <person name="Amos-Landgraf J."/>
            <person name="Schwartz D.C."/>
            <person name="Cheng Z."/>
            <person name="Lindblad-Toh K."/>
            <person name="Eichler E.E."/>
            <person name="Ponting C.P."/>
        </authorList>
    </citation>
    <scope>NUCLEOTIDE SEQUENCE [LARGE SCALE GENOMIC DNA]</scope>
    <source>
        <strain>C57BL/6J</strain>
    </source>
</reference>
<reference key="7">
    <citation type="journal article" date="2004" name="Genome Res.">
        <title>The status, quality, and expansion of the NIH full-length cDNA project: the Mammalian Gene Collection (MGC).</title>
        <authorList>
            <consortium name="The MGC Project Team"/>
        </authorList>
    </citation>
    <scope>NUCLEOTIDE SEQUENCE [LARGE SCALE MRNA] (ISOFORM 1)</scope>
    <source>
        <tissue>Brain</tissue>
    </source>
</reference>
<reference key="8">
    <citation type="journal article" date="2005" name="J. Immunol.">
        <title>The inhibitory receptor IRp60 (CD300a) is expressed and functional on human mast cells.</title>
        <authorList>
            <person name="Bachelet I."/>
            <person name="Munitz A."/>
            <person name="Moretta A."/>
            <person name="Moretta L."/>
            <person name="Levi-Schaffer F."/>
        </authorList>
    </citation>
    <scope>FUNCTION</scope>
    <scope>TISSUE SPECIFICITY</scope>
</reference>
<reference key="9">
    <citation type="journal article" date="2009" name="Immunity">
        <title>The phagosomal proteome in interferon-gamma-activated macrophages.</title>
        <authorList>
            <person name="Trost M."/>
            <person name="English L."/>
            <person name="Lemieux S."/>
            <person name="Courcelles M."/>
            <person name="Desjardins M."/>
            <person name="Thibault P."/>
        </authorList>
    </citation>
    <scope>PHOSPHORYLATION [LARGE SCALE ANALYSIS] AT TYR-303</scope>
    <scope>IDENTIFICATION BY MASS SPECTROMETRY [LARGE SCALE ANALYSIS]</scope>
</reference>
<proteinExistence type="evidence at protein level"/>
<evidence type="ECO:0000250" key="1">
    <source>
        <dbReference type="UniProtKB" id="Q9UGN4"/>
    </source>
</evidence>
<evidence type="ECO:0000255" key="2"/>
<evidence type="ECO:0000255" key="3">
    <source>
        <dbReference type="PROSITE-ProRule" id="PRU00114"/>
    </source>
</evidence>
<evidence type="ECO:0000256" key="4">
    <source>
        <dbReference type="SAM" id="MobiDB-lite"/>
    </source>
</evidence>
<evidence type="ECO:0000269" key="5">
    <source>
    </source>
</evidence>
<evidence type="ECO:0000269" key="6">
    <source>
    </source>
</evidence>
<evidence type="ECO:0000269" key="7">
    <source>
    </source>
</evidence>
<evidence type="ECO:0000303" key="8">
    <source>
    </source>
</evidence>
<evidence type="ECO:0000305" key="9"/>
<evidence type="ECO:0007744" key="10">
    <source>
    </source>
</evidence>
<name>CLM8_MOUSE</name>
<gene>
    <name type="primary">Cd300a</name>
    <name type="synonym">Clm8</name>
    <name type="synonym">Lmir1</name>
    <name type="synonym">Mcpir1</name>
</gene>
<sequence>MTQLASAVWLPTLLLLLLLFWLPGCVPLHGPSTMSGSVGESLSVSCRYEEKFKTKDKYWCRVSLKILCKDIVKTSSSEEARSGRVTIRDHPDNLTFTVTYESLTLEDADTYMCAVDISLFDGSLGFDKYFKIELSVVPSEDPVSSPGPTLETPVVSTSLPTKGPALGSNTEGHREHDYSQGLRLPALLSVLALLLFLLVGTSLLAWRMFQKRLVKADRHPELSQNLRQASEQNECQYVNLQLHTWSLREEPVLPSQVEVVEYSTLALPQEELHYSSVAFNSQRQDSHANGDSLHQPQDQKAEYSEIQKPRKGLSDLYL</sequence>
<dbReference type="EMBL" id="AB095675">
    <property type="protein sequence ID" value="BAC80268.1"/>
    <property type="molecule type" value="mRNA"/>
</dbReference>
<dbReference type="EMBL" id="AB091765">
    <property type="protein sequence ID" value="BAC77074.1"/>
    <property type="molecule type" value="mRNA"/>
</dbReference>
<dbReference type="EMBL" id="AB091766">
    <property type="protein sequence ID" value="BAC77075.1"/>
    <property type="molecule type" value="mRNA"/>
</dbReference>
<dbReference type="EMBL" id="AY457054">
    <property type="protein sequence ID" value="AAR27945.1"/>
    <property type="molecule type" value="mRNA"/>
</dbReference>
<dbReference type="EMBL" id="AB065156">
    <property type="protein sequence ID" value="BAC22595.1"/>
    <property type="molecule type" value="mRNA"/>
</dbReference>
<dbReference type="EMBL" id="AK045869">
    <property type="protein sequence ID" value="BAC32515.1"/>
    <property type="molecule type" value="mRNA"/>
</dbReference>
<dbReference type="EMBL" id="AL669969">
    <property type="protein sequence ID" value="CAM18755.1"/>
    <property type="molecule type" value="Genomic_DNA"/>
</dbReference>
<dbReference type="EMBL" id="AL669969">
    <property type="protein sequence ID" value="CAM18756.1"/>
    <property type="molecule type" value="Genomic_DNA"/>
</dbReference>
<dbReference type="EMBL" id="BC139296">
    <property type="protein sequence ID" value="AAI39297.1"/>
    <property type="molecule type" value="mRNA"/>
</dbReference>
<dbReference type="EMBL" id="BC139297">
    <property type="protein sequence ID" value="AAI39298.1"/>
    <property type="molecule type" value="mRNA"/>
</dbReference>
<dbReference type="CCDS" id="CCDS25613.1">
    <molecule id="Q6SJQ0-1"/>
</dbReference>
<dbReference type="CCDS" id="CCDS83923.1">
    <molecule id="Q6SJQ0-2"/>
</dbReference>
<dbReference type="RefSeq" id="NP_001334583.1">
    <molecule id="Q6SJQ0-2"/>
    <property type="nucleotide sequence ID" value="NM_001347654.2"/>
</dbReference>
<dbReference type="RefSeq" id="NP_739564.1">
    <molecule id="Q6SJQ0-1"/>
    <property type="nucleotide sequence ID" value="NM_170758.4"/>
</dbReference>
<dbReference type="RefSeq" id="XP_030101751.1">
    <molecule id="Q6SJQ0-1"/>
    <property type="nucleotide sequence ID" value="XM_030245891.2"/>
</dbReference>
<dbReference type="SMR" id="Q6SJQ0"/>
<dbReference type="BioGRID" id="229881">
    <property type="interactions" value="3"/>
</dbReference>
<dbReference type="FunCoup" id="Q6SJQ0">
    <property type="interactions" value="1036"/>
</dbReference>
<dbReference type="STRING" id="10090.ENSMUSP00000102192"/>
<dbReference type="GlyCosmos" id="Q6SJQ0">
    <property type="glycosylation" value="1 site, No reported glycans"/>
</dbReference>
<dbReference type="GlyGen" id="Q6SJQ0">
    <property type="glycosylation" value="1 site"/>
</dbReference>
<dbReference type="iPTMnet" id="Q6SJQ0"/>
<dbReference type="PhosphoSitePlus" id="Q6SJQ0"/>
<dbReference type="PaxDb" id="10090-ENSMUSP00000102192"/>
<dbReference type="PeptideAtlas" id="Q6SJQ0"/>
<dbReference type="ProteomicsDB" id="281643">
    <molecule id="Q6SJQ0-1"/>
</dbReference>
<dbReference type="ProteomicsDB" id="281644">
    <molecule id="Q6SJQ0-2"/>
</dbReference>
<dbReference type="DNASU" id="217303"/>
<dbReference type="Ensembl" id="ENSMUST00000045151.6">
    <molecule id="Q6SJQ0-2"/>
    <property type="protein sequence ID" value="ENSMUSP00000036773.6"/>
    <property type="gene ID" value="ENSMUSG00000034652.13"/>
</dbReference>
<dbReference type="Ensembl" id="ENSMUST00000106582.9">
    <molecule id="Q6SJQ0-1"/>
    <property type="protein sequence ID" value="ENSMUSP00000102192.3"/>
    <property type="gene ID" value="ENSMUSG00000034652.13"/>
</dbReference>
<dbReference type="GeneID" id="217303"/>
<dbReference type="KEGG" id="mmu:217303"/>
<dbReference type="UCSC" id="uc007mfy.1">
    <molecule id="Q6SJQ0-1"/>
    <property type="organism name" value="mouse"/>
</dbReference>
<dbReference type="UCSC" id="uc007mfz.1">
    <molecule id="Q6SJQ0-2"/>
    <property type="organism name" value="mouse"/>
</dbReference>
<dbReference type="AGR" id="MGI:2443411"/>
<dbReference type="CTD" id="11314"/>
<dbReference type="MGI" id="MGI:2443411">
    <property type="gene designation" value="Cd300a"/>
</dbReference>
<dbReference type="VEuPathDB" id="HostDB:ENSMUSG00000034652"/>
<dbReference type="eggNOG" id="ENOG502S7MA">
    <property type="taxonomic scope" value="Eukaryota"/>
</dbReference>
<dbReference type="GeneTree" id="ENSGT00940000163981"/>
<dbReference type="HOGENOM" id="CLU_051023_0_0_1"/>
<dbReference type="InParanoid" id="Q6SJQ0"/>
<dbReference type="OMA" id="YANMELQ"/>
<dbReference type="OrthoDB" id="8959642at2759"/>
<dbReference type="PhylomeDB" id="Q6SJQ0"/>
<dbReference type="TreeFam" id="TF334441"/>
<dbReference type="Reactome" id="R-MMU-198933">
    <property type="pathway name" value="Immunoregulatory interactions between a Lymphoid and a non-Lymphoid cell"/>
</dbReference>
<dbReference type="BioGRID-ORCS" id="217303">
    <property type="hits" value="4 hits in 77 CRISPR screens"/>
</dbReference>
<dbReference type="PRO" id="PR:Q6SJQ0"/>
<dbReference type="Proteomes" id="UP000000589">
    <property type="component" value="Chromosome 11"/>
</dbReference>
<dbReference type="RNAct" id="Q6SJQ0">
    <property type="molecule type" value="protein"/>
</dbReference>
<dbReference type="Bgee" id="ENSMUSG00000034652">
    <property type="expression patterns" value="Expressed in granulocyte and 93 other cell types or tissues"/>
</dbReference>
<dbReference type="GO" id="GO:0005886">
    <property type="term" value="C:plasma membrane"/>
    <property type="evidence" value="ECO:0000314"/>
    <property type="project" value="MGI"/>
</dbReference>
<dbReference type="GO" id="GO:0019902">
    <property type="term" value="F:phosphatase binding"/>
    <property type="evidence" value="ECO:0000353"/>
    <property type="project" value="MGI"/>
</dbReference>
<dbReference type="GO" id="GO:0051649">
    <property type="term" value="P:establishment of localization in cell"/>
    <property type="evidence" value="ECO:0000314"/>
    <property type="project" value="MGI"/>
</dbReference>
<dbReference type="GO" id="GO:0043303">
    <property type="term" value="P:mast cell degranulation"/>
    <property type="evidence" value="ECO:0000314"/>
    <property type="project" value="MGI"/>
</dbReference>
<dbReference type="GO" id="GO:0043305">
    <property type="term" value="P:negative regulation of mast cell degranulation"/>
    <property type="evidence" value="ECO:0000314"/>
    <property type="project" value="MGI"/>
</dbReference>
<dbReference type="GO" id="GO:0014063">
    <property type="term" value="P:negative regulation of serotonin secretion"/>
    <property type="evidence" value="ECO:0000314"/>
    <property type="project" value="MGI"/>
</dbReference>
<dbReference type="GO" id="GO:0006898">
    <property type="term" value="P:receptor-mediated endocytosis"/>
    <property type="evidence" value="ECO:0000314"/>
    <property type="project" value="MGI"/>
</dbReference>
<dbReference type="GO" id="GO:0001820">
    <property type="term" value="P:serotonin secretion"/>
    <property type="evidence" value="ECO:0000314"/>
    <property type="project" value="MGI"/>
</dbReference>
<dbReference type="GO" id="GO:0002552">
    <property type="term" value="P:serotonin secretion by mast cell"/>
    <property type="evidence" value="ECO:0000314"/>
    <property type="project" value="MGI"/>
</dbReference>
<dbReference type="CDD" id="cd05716">
    <property type="entry name" value="IgV_pIgR_like"/>
    <property type="match status" value="1"/>
</dbReference>
<dbReference type="FunFam" id="2.60.40.10:FF:000370">
    <property type="entry name" value="CMRF35-like molecule 1"/>
    <property type="match status" value="1"/>
</dbReference>
<dbReference type="Gene3D" id="2.60.40.10">
    <property type="entry name" value="Immunoglobulins"/>
    <property type="match status" value="1"/>
</dbReference>
<dbReference type="InterPro" id="IPR050671">
    <property type="entry name" value="CD300_family_receptors"/>
</dbReference>
<dbReference type="InterPro" id="IPR007110">
    <property type="entry name" value="Ig-like_dom"/>
</dbReference>
<dbReference type="InterPro" id="IPR036179">
    <property type="entry name" value="Ig-like_dom_sf"/>
</dbReference>
<dbReference type="InterPro" id="IPR013783">
    <property type="entry name" value="Ig-like_fold"/>
</dbReference>
<dbReference type="InterPro" id="IPR003599">
    <property type="entry name" value="Ig_sub"/>
</dbReference>
<dbReference type="InterPro" id="IPR013106">
    <property type="entry name" value="Ig_V-set"/>
</dbReference>
<dbReference type="PANTHER" id="PTHR11860:SF116">
    <property type="entry name" value="CMRF35-LIKE MOLECULE 8"/>
    <property type="match status" value="1"/>
</dbReference>
<dbReference type="PANTHER" id="PTHR11860">
    <property type="entry name" value="POLYMERIC-IMMUNOGLOBULIN RECEPTOR"/>
    <property type="match status" value="1"/>
</dbReference>
<dbReference type="Pfam" id="PF15330">
    <property type="entry name" value="SIT"/>
    <property type="match status" value="1"/>
</dbReference>
<dbReference type="Pfam" id="PF07686">
    <property type="entry name" value="V-set"/>
    <property type="match status" value="1"/>
</dbReference>
<dbReference type="SMART" id="SM00409">
    <property type="entry name" value="IG"/>
    <property type="match status" value="1"/>
</dbReference>
<dbReference type="SUPFAM" id="SSF48726">
    <property type="entry name" value="Immunoglobulin"/>
    <property type="match status" value="1"/>
</dbReference>
<dbReference type="PROSITE" id="PS50835">
    <property type="entry name" value="IG_LIKE"/>
    <property type="match status" value="1"/>
</dbReference>
<organism>
    <name type="scientific">Mus musculus</name>
    <name type="common">Mouse</name>
    <dbReference type="NCBI Taxonomy" id="10090"/>
    <lineage>
        <taxon>Eukaryota</taxon>
        <taxon>Metazoa</taxon>
        <taxon>Chordata</taxon>
        <taxon>Craniata</taxon>
        <taxon>Vertebrata</taxon>
        <taxon>Euteleostomi</taxon>
        <taxon>Mammalia</taxon>
        <taxon>Eutheria</taxon>
        <taxon>Euarchontoglires</taxon>
        <taxon>Glires</taxon>
        <taxon>Rodentia</taxon>
        <taxon>Myomorpha</taxon>
        <taxon>Muroidea</taxon>
        <taxon>Muridae</taxon>
        <taxon>Murinae</taxon>
        <taxon>Mus</taxon>
        <taxon>Mus</taxon>
    </lineage>
</organism>
<protein>
    <recommendedName>
        <fullName>CMRF35-like molecule 8</fullName>
        <shortName>CLM-8</shortName>
    </recommendedName>
    <alternativeName>
        <fullName>CD300 antigen-like family member A</fullName>
    </alternativeName>
    <alternativeName>
        <fullName>Leukocyte mono-Ig-like receptor 1</fullName>
    </alternativeName>
    <alternativeName>
        <fullName>Mast cell-derived paired immunoglobulin-like receptor 1</fullName>
    </alternativeName>
    <alternativeName>
        <fullName>Myeloid-associated immunoglobulin-like receptor 1</fullName>
        <shortName>MAIR-1</shortName>
        <shortName>MAIR-I</shortName>
    </alternativeName>
    <cdAntigenName>CD300a</cdAntigenName>
</protein>